<sequence length="333" mass="36396">MSAVSRIATLTRQSMLSALSDNNRLRLFSGSSNPSLSQEVARYLGMDIGPMLRKRFADGELYIQIQESIRGGDVYLIQPCCHPVNDNLMELLIMIDACRRASARQITAVLPYYGYARADRKTAGRESISAKLVANLITGAGAQRVLAMDLHSAQIQGYFDIPCDHMYGSPVIIDYLKSKQLTDLVVVSPDVGGVARARAFAKKLNDAPLAIIDKRRQSHNVAEVLNLIGDVDGKTAVLVDDMIDTAGTLSEGSRLLRAQGARQVYACATHAVFSEPAINRLSGGLFEEVIVTNTIPVPDDHHFPQLTILSVANLIGEAIWRIHEESSVSSMFR</sequence>
<proteinExistence type="inferred from homology"/>
<evidence type="ECO:0000255" key="1">
    <source>
        <dbReference type="HAMAP-Rule" id="MF_00583"/>
    </source>
</evidence>
<reference key="1">
    <citation type="journal article" date="1995" name="DNA Res.">
        <title>Sequence analysis of the genome of the unicellular cyanobacterium Synechocystis sp. strain PCC6803. I. Sequence features in the 1 Mb region from map positions 64% to 92% of the genome.</title>
        <authorList>
            <person name="Kaneko T."/>
            <person name="Tanaka A."/>
            <person name="Sato S."/>
            <person name="Kotani H."/>
            <person name="Sazuka T."/>
            <person name="Miyajima N."/>
            <person name="Sugiura M."/>
            <person name="Tabata S."/>
        </authorList>
    </citation>
    <scope>NUCLEOTIDE SEQUENCE [LARGE SCALE GENOMIC DNA]</scope>
    <source>
        <strain>ATCC 27184 / PCC 6803 / N-1</strain>
    </source>
</reference>
<reference key="2">
    <citation type="journal article" date="1996" name="DNA Res.">
        <title>Sequence analysis of the genome of the unicellular cyanobacterium Synechocystis sp. strain PCC6803. II. Sequence determination of the entire genome and assignment of potential protein-coding regions.</title>
        <authorList>
            <person name="Kaneko T."/>
            <person name="Sato S."/>
            <person name="Kotani H."/>
            <person name="Tanaka A."/>
            <person name="Asamizu E."/>
            <person name="Nakamura Y."/>
            <person name="Miyajima N."/>
            <person name="Hirosawa M."/>
            <person name="Sugiura M."/>
            <person name="Sasamoto S."/>
            <person name="Kimura T."/>
            <person name="Hosouchi T."/>
            <person name="Matsuno A."/>
            <person name="Muraki A."/>
            <person name="Nakazaki N."/>
            <person name="Naruo K."/>
            <person name="Okumura S."/>
            <person name="Shimpo S."/>
            <person name="Takeuchi C."/>
            <person name="Wada T."/>
            <person name="Watanabe A."/>
            <person name="Yamada M."/>
            <person name="Yasuda M."/>
            <person name="Tabata S."/>
        </authorList>
    </citation>
    <scope>NUCLEOTIDE SEQUENCE [LARGE SCALE GENOMIC DNA]</scope>
    <source>
        <strain>ATCC 27184 / PCC 6803 / Kazusa</strain>
    </source>
</reference>
<gene>
    <name evidence="1" type="primary">prs</name>
    <name type="synonym">prsA</name>
    <name type="ordered locus">sll0469</name>
</gene>
<name>KPRS_SYNY3</name>
<comment type="function">
    <text evidence="1">Involved in the biosynthesis of the central metabolite phospho-alpha-D-ribosyl-1-pyrophosphate (PRPP) via the transfer of pyrophosphoryl group from ATP to 1-hydroxyl of ribose-5-phosphate (Rib-5-P).</text>
</comment>
<comment type="catalytic activity">
    <reaction evidence="1">
        <text>D-ribose 5-phosphate + ATP = 5-phospho-alpha-D-ribose 1-diphosphate + AMP + H(+)</text>
        <dbReference type="Rhea" id="RHEA:15609"/>
        <dbReference type="ChEBI" id="CHEBI:15378"/>
        <dbReference type="ChEBI" id="CHEBI:30616"/>
        <dbReference type="ChEBI" id="CHEBI:58017"/>
        <dbReference type="ChEBI" id="CHEBI:78346"/>
        <dbReference type="ChEBI" id="CHEBI:456215"/>
        <dbReference type="EC" id="2.7.6.1"/>
    </reaction>
</comment>
<comment type="cofactor">
    <cofactor evidence="1">
        <name>Mg(2+)</name>
        <dbReference type="ChEBI" id="CHEBI:18420"/>
    </cofactor>
    <text evidence="1">Binds 2 Mg(2+) ions per subunit.</text>
</comment>
<comment type="pathway">
    <text evidence="1">Metabolic intermediate biosynthesis; 5-phospho-alpha-D-ribose 1-diphosphate biosynthesis; 5-phospho-alpha-D-ribose 1-diphosphate from D-ribose 5-phosphate (route I): step 1/1.</text>
</comment>
<comment type="subunit">
    <text evidence="1">Homohexamer.</text>
</comment>
<comment type="subcellular location">
    <subcellularLocation>
        <location evidence="1">Cytoplasm</location>
    </subcellularLocation>
</comment>
<comment type="similarity">
    <text evidence="1">Belongs to the ribose-phosphate pyrophosphokinase family. Class I subfamily.</text>
</comment>
<feature type="chain" id="PRO_0000141218" description="Ribose-phosphate pyrophosphokinase">
    <location>
        <begin position="1"/>
        <end position="333"/>
    </location>
</feature>
<feature type="active site" evidence="1">
    <location>
        <position position="214"/>
    </location>
</feature>
<feature type="binding site" evidence="1">
    <location>
        <begin position="58"/>
        <end position="60"/>
    </location>
    <ligand>
        <name>ATP</name>
        <dbReference type="ChEBI" id="CHEBI:30616"/>
    </ligand>
</feature>
<feature type="binding site" evidence="1">
    <location>
        <position position="151"/>
    </location>
    <ligand>
        <name>Mg(2+)</name>
        <dbReference type="ChEBI" id="CHEBI:18420"/>
        <label>1</label>
    </ligand>
</feature>
<feature type="binding site" evidence="1">
    <location>
        <position position="190"/>
    </location>
    <ligand>
        <name>Mg(2+)</name>
        <dbReference type="ChEBI" id="CHEBI:18420"/>
        <label>2</label>
    </ligand>
</feature>
<feature type="binding site" evidence="1">
    <location>
        <position position="216"/>
    </location>
    <ligand>
        <name>D-ribose 5-phosphate</name>
        <dbReference type="ChEBI" id="CHEBI:78346"/>
    </ligand>
</feature>
<feature type="binding site" evidence="1">
    <location>
        <position position="240"/>
    </location>
    <ligand>
        <name>D-ribose 5-phosphate</name>
        <dbReference type="ChEBI" id="CHEBI:78346"/>
    </ligand>
</feature>
<feature type="binding site" evidence="1">
    <location>
        <begin position="244"/>
        <end position="248"/>
    </location>
    <ligand>
        <name>D-ribose 5-phosphate</name>
        <dbReference type="ChEBI" id="CHEBI:78346"/>
    </ligand>
</feature>
<protein>
    <recommendedName>
        <fullName evidence="1">Ribose-phosphate pyrophosphokinase</fullName>
        <shortName evidence="1">RPPK</shortName>
        <ecNumber evidence="1">2.7.6.1</ecNumber>
    </recommendedName>
    <alternativeName>
        <fullName evidence="1">5-phospho-D-ribosyl alpha-1-diphosphate synthase</fullName>
    </alternativeName>
    <alternativeName>
        <fullName evidence="1">Phosphoribosyl diphosphate synthase</fullName>
    </alternativeName>
    <alternativeName>
        <fullName evidence="1">Phosphoribosyl pyrophosphate synthase</fullName>
        <shortName evidence="1">P-Rib-PP synthase</shortName>
        <shortName evidence="1">PRPP synthase</shortName>
        <shortName evidence="1">PRPPase</shortName>
    </alternativeName>
</protein>
<keyword id="KW-0067">ATP-binding</keyword>
<keyword id="KW-0963">Cytoplasm</keyword>
<keyword id="KW-0418">Kinase</keyword>
<keyword id="KW-0460">Magnesium</keyword>
<keyword id="KW-0479">Metal-binding</keyword>
<keyword id="KW-0545">Nucleotide biosynthesis</keyword>
<keyword id="KW-0547">Nucleotide-binding</keyword>
<keyword id="KW-1185">Reference proteome</keyword>
<keyword id="KW-0808">Transferase</keyword>
<organism>
    <name type="scientific">Synechocystis sp. (strain ATCC 27184 / PCC 6803 / Kazusa)</name>
    <dbReference type="NCBI Taxonomy" id="1111708"/>
    <lineage>
        <taxon>Bacteria</taxon>
        <taxon>Bacillati</taxon>
        <taxon>Cyanobacteriota</taxon>
        <taxon>Cyanophyceae</taxon>
        <taxon>Synechococcales</taxon>
        <taxon>Merismopediaceae</taxon>
        <taxon>Synechocystis</taxon>
    </lineage>
</organism>
<dbReference type="EC" id="2.7.6.1" evidence="1"/>
<dbReference type="EMBL" id="BA000022">
    <property type="protein sequence ID" value="BAA10604.1"/>
    <property type="molecule type" value="Genomic_DNA"/>
</dbReference>
<dbReference type="PIR" id="S76660">
    <property type="entry name" value="S76660"/>
</dbReference>
<dbReference type="SMR" id="Q55848"/>
<dbReference type="FunCoup" id="Q55848">
    <property type="interactions" value="495"/>
</dbReference>
<dbReference type="STRING" id="1148.gene:10500108"/>
<dbReference type="PaxDb" id="1148-1001766"/>
<dbReference type="EnsemblBacteria" id="BAA10604">
    <property type="protein sequence ID" value="BAA10604"/>
    <property type="gene ID" value="BAA10604"/>
</dbReference>
<dbReference type="KEGG" id="syn:sll0469"/>
<dbReference type="eggNOG" id="COG0462">
    <property type="taxonomic scope" value="Bacteria"/>
</dbReference>
<dbReference type="InParanoid" id="Q55848"/>
<dbReference type="PhylomeDB" id="Q55848"/>
<dbReference type="UniPathway" id="UPA00087">
    <property type="reaction ID" value="UER00172"/>
</dbReference>
<dbReference type="Proteomes" id="UP000001425">
    <property type="component" value="Chromosome"/>
</dbReference>
<dbReference type="GO" id="GO:0005737">
    <property type="term" value="C:cytoplasm"/>
    <property type="evidence" value="ECO:0000318"/>
    <property type="project" value="GO_Central"/>
</dbReference>
<dbReference type="GO" id="GO:0002189">
    <property type="term" value="C:ribose phosphate diphosphokinase complex"/>
    <property type="evidence" value="ECO:0000318"/>
    <property type="project" value="GO_Central"/>
</dbReference>
<dbReference type="GO" id="GO:0005524">
    <property type="term" value="F:ATP binding"/>
    <property type="evidence" value="ECO:0007669"/>
    <property type="project" value="UniProtKB-KW"/>
</dbReference>
<dbReference type="GO" id="GO:0016301">
    <property type="term" value="F:kinase activity"/>
    <property type="evidence" value="ECO:0007669"/>
    <property type="project" value="UniProtKB-KW"/>
</dbReference>
<dbReference type="GO" id="GO:0000287">
    <property type="term" value="F:magnesium ion binding"/>
    <property type="evidence" value="ECO:0007669"/>
    <property type="project" value="UniProtKB-UniRule"/>
</dbReference>
<dbReference type="GO" id="GO:0004749">
    <property type="term" value="F:ribose phosphate diphosphokinase activity"/>
    <property type="evidence" value="ECO:0000318"/>
    <property type="project" value="GO_Central"/>
</dbReference>
<dbReference type="GO" id="GO:0006015">
    <property type="term" value="P:5-phosphoribose 1-diphosphate biosynthetic process"/>
    <property type="evidence" value="ECO:0000318"/>
    <property type="project" value="GO_Central"/>
</dbReference>
<dbReference type="GO" id="GO:0006164">
    <property type="term" value="P:purine nucleotide biosynthetic process"/>
    <property type="evidence" value="ECO:0000318"/>
    <property type="project" value="GO_Central"/>
</dbReference>
<dbReference type="GO" id="GO:0009156">
    <property type="term" value="P:ribonucleoside monophosphate biosynthetic process"/>
    <property type="evidence" value="ECO:0007669"/>
    <property type="project" value="InterPro"/>
</dbReference>
<dbReference type="CDD" id="cd06223">
    <property type="entry name" value="PRTases_typeI"/>
    <property type="match status" value="1"/>
</dbReference>
<dbReference type="FunFam" id="3.40.50.2020:FF:000002">
    <property type="entry name" value="Ribose-phosphate pyrophosphokinase"/>
    <property type="match status" value="1"/>
</dbReference>
<dbReference type="FunFam" id="3.40.50.2020:FF:000014">
    <property type="entry name" value="Ribose-phosphate pyrophosphokinase 1"/>
    <property type="match status" value="1"/>
</dbReference>
<dbReference type="Gene3D" id="3.40.50.2020">
    <property type="match status" value="2"/>
</dbReference>
<dbReference type="HAMAP" id="MF_00583_B">
    <property type="entry name" value="RibP_PPkinase_B"/>
    <property type="match status" value="1"/>
</dbReference>
<dbReference type="InterPro" id="IPR000842">
    <property type="entry name" value="PRib_PP_synth_CS"/>
</dbReference>
<dbReference type="InterPro" id="IPR029099">
    <property type="entry name" value="Pribosyltran_N"/>
</dbReference>
<dbReference type="InterPro" id="IPR000836">
    <property type="entry name" value="PRibTrfase_dom"/>
</dbReference>
<dbReference type="InterPro" id="IPR029057">
    <property type="entry name" value="PRTase-like"/>
</dbReference>
<dbReference type="InterPro" id="IPR005946">
    <property type="entry name" value="Rib-P_diPkinase"/>
</dbReference>
<dbReference type="InterPro" id="IPR037515">
    <property type="entry name" value="Rib-P_diPkinase_bac"/>
</dbReference>
<dbReference type="NCBIfam" id="NF002320">
    <property type="entry name" value="PRK01259.1"/>
    <property type="match status" value="1"/>
</dbReference>
<dbReference type="NCBIfam" id="NF002758">
    <property type="entry name" value="PRK02812.1"/>
    <property type="match status" value="1"/>
</dbReference>
<dbReference type="NCBIfam" id="TIGR01251">
    <property type="entry name" value="ribP_PPkin"/>
    <property type="match status" value="1"/>
</dbReference>
<dbReference type="PANTHER" id="PTHR10210">
    <property type="entry name" value="RIBOSE-PHOSPHATE DIPHOSPHOKINASE FAMILY MEMBER"/>
    <property type="match status" value="1"/>
</dbReference>
<dbReference type="PANTHER" id="PTHR10210:SF41">
    <property type="entry name" value="RIBOSE-PHOSPHATE PYROPHOSPHOKINASE 1, CHLOROPLASTIC"/>
    <property type="match status" value="1"/>
</dbReference>
<dbReference type="Pfam" id="PF14572">
    <property type="entry name" value="Pribosyl_synth"/>
    <property type="match status" value="1"/>
</dbReference>
<dbReference type="Pfam" id="PF13793">
    <property type="entry name" value="Pribosyltran_N"/>
    <property type="match status" value="1"/>
</dbReference>
<dbReference type="SMART" id="SM01400">
    <property type="entry name" value="Pribosyltran_N"/>
    <property type="match status" value="1"/>
</dbReference>
<dbReference type="SUPFAM" id="SSF53271">
    <property type="entry name" value="PRTase-like"/>
    <property type="match status" value="1"/>
</dbReference>
<dbReference type="PROSITE" id="PS00114">
    <property type="entry name" value="PRPP_SYNTHASE"/>
    <property type="match status" value="1"/>
</dbReference>
<accession>Q55848</accession>